<name>IXTPA_THEP3</name>
<dbReference type="EC" id="3.6.1.66" evidence="1"/>
<dbReference type="EMBL" id="CP000924">
    <property type="protein sequence ID" value="ABY95319.1"/>
    <property type="molecule type" value="Genomic_DNA"/>
</dbReference>
<dbReference type="RefSeq" id="WP_004405389.1">
    <property type="nucleotide sequence ID" value="NC_010321.1"/>
</dbReference>
<dbReference type="SMR" id="B0KBM4"/>
<dbReference type="STRING" id="340099.Teth39_1682"/>
<dbReference type="KEGG" id="tpd:Teth39_1682"/>
<dbReference type="eggNOG" id="COG0127">
    <property type="taxonomic scope" value="Bacteria"/>
</dbReference>
<dbReference type="HOGENOM" id="CLU_082080_0_2_9"/>
<dbReference type="Proteomes" id="UP000002156">
    <property type="component" value="Chromosome"/>
</dbReference>
<dbReference type="GO" id="GO:0005829">
    <property type="term" value="C:cytosol"/>
    <property type="evidence" value="ECO:0007669"/>
    <property type="project" value="TreeGrafter"/>
</dbReference>
<dbReference type="GO" id="GO:0035870">
    <property type="term" value="F:dITP diphosphatase activity"/>
    <property type="evidence" value="ECO:0007669"/>
    <property type="project" value="RHEA"/>
</dbReference>
<dbReference type="GO" id="GO:0036220">
    <property type="term" value="F:ITP diphosphatase activity"/>
    <property type="evidence" value="ECO:0007669"/>
    <property type="project" value="UniProtKB-EC"/>
</dbReference>
<dbReference type="GO" id="GO:0046872">
    <property type="term" value="F:metal ion binding"/>
    <property type="evidence" value="ECO:0007669"/>
    <property type="project" value="UniProtKB-KW"/>
</dbReference>
<dbReference type="GO" id="GO:0000166">
    <property type="term" value="F:nucleotide binding"/>
    <property type="evidence" value="ECO:0007669"/>
    <property type="project" value="UniProtKB-KW"/>
</dbReference>
<dbReference type="GO" id="GO:0017111">
    <property type="term" value="F:ribonucleoside triphosphate phosphatase activity"/>
    <property type="evidence" value="ECO:0007669"/>
    <property type="project" value="InterPro"/>
</dbReference>
<dbReference type="GO" id="GO:0036222">
    <property type="term" value="F:XTP diphosphatase activity"/>
    <property type="evidence" value="ECO:0007669"/>
    <property type="project" value="RHEA"/>
</dbReference>
<dbReference type="GO" id="GO:0009117">
    <property type="term" value="P:nucleotide metabolic process"/>
    <property type="evidence" value="ECO:0007669"/>
    <property type="project" value="UniProtKB-KW"/>
</dbReference>
<dbReference type="GO" id="GO:0009146">
    <property type="term" value="P:purine nucleoside triphosphate catabolic process"/>
    <property type="evidence" value="ECO:0007669"/>
    <property type="project" value="UniProtKB-UniRule"/>
</dbReference>
<dbReference type="CDD" id="cd00515">
    <property type="entry name" value="HAM1"/>
    <property type="match status" value="1"/>
</dbReference>
<dbReference type="FunFam" id="3.90.950.10:FF:000001">
    <property type="entry name" value="dITP/XTP pyrophosphatase"/>
    <property type="match status" value="1"/>
</dbReference>
<dbReference type="Gene3D" id="3.90.950.10">
    <property type="match status" value="1"/>
</dbReference>
<dbReference type="HAMAP" id="MF_01405">
    <property type="entry name" value="Non_canon_purine_NTPase"/>
    <property type="match status" value="1"/>
</dbReference>
<dbReference type="InterPro" id="IPR020922">
    <property type="entry name" value="dITP/XTP_pyrophosphatase"/>
</dbReference>
<dbReference type="InterPro" id="IPR029001">
    <property type="entry name" value="ITPase-like_fam"/>
</dbReference>
<dbReference type="InterPro" id="IPR002637">
    <property type="entry name" value="RdgB/HAM1"/>
</dbReference>
<dbReference type="NCBIfam" id="NF011397">
    <property type="entry name" value="PRK14822.1"/>
    <property type="match status" value="1"/>
</dbReference>
<dbReference type="NCBIfam" id="TIGR00042">
    <property type="entry name" value="RdgB/HAM1 family non-canonical purine NTP pyrophosphatase"/>
    <property type="match status" value="1"/>
</dbReference>
<dbReference type="PANTHER" id="PTHR11067:SF9">
    <property type="entry name" value="INOSINE TRIPHOSPHATE PYROPHOSPHATASE"/>
    <property type="match status" value="1"/>
</dbReference>
<dbReference type="PANTHER" id="PTHR11067">
    <property type="entry name" value="INOSINE TRIPHOSPHATE PYROPHOSPHATASE/HAM1 PROTEIN"/>
    <property type="match status" value="1"/>
</dbReference>
<dbReference type="Pfam" id="PF01725">
    <property type="entry name" value="Ham1p_like"/>
    <property type="match status" value="1"/>
</dbReference>
<dbReference type="SUPFAM" id="SSF52972">
    <property type="entry name" value="ITPase-like"/>
    <property type="match status" value="1"/>
</dbReference>
<evidence type="ECO:0000255" key="1">
    <source>
        <dbReference type="HAMAP-Rule" id="MF_01405"/>
    </source>
</evidence>
<sequence length="198" mass="22672">MKIIIATHNPHKTEEIKNFFKGYPVEIYSMADLGIKEDIEETGNTIEENALIKARFLKEKVDGIVIADDTGLFVEHLNGQPGVYSARFAGENATYEDNNKKLLKLLEGVPYEKRKAYFKTVIAVVEREKETLLEGKLEGHILDHPRGKNGFGYDPVFYVDNLEKSLAELTMEEKNKISHRADALMKLKNYILKRLEEK</sequence>
<reference key="1">
    <citation type="submission" date="2008-01" db="EMBL/GenBank/DDBJ databases">
        <title>Complete sequence of Thermoanaerobacter pseudethanolicus 39E.</title>
        <authorList>
            <person name="Copeland A."/>
            <person name="Lucas S."/>
            <person name="Lapidus A."/>
            <person name="Barry K."/>
            <person name="Glavina del Rio T."/>
            <person name="Dalin E."/>
            <person name="Tice H."/>
            <person name="Pitluck S."/>
            <person name="Bruce D."/>
            <person name="Goodwin L."/>
            <person name="Saunders E."/>
            <person name="Brettin T."/>
            <person name="Detter J.C."/>
            <person name="Han C."/>
            <person name="Schmutz J."/>
            <person name="Larimer F."/>
            <person name="Land M."/>
            <person name="Hauser L."/>
            <person name="Kyrpides N."/>
            <person name="Lykidis A."/>
            <person name="Hemme C."/>
            <person name="Fields M.W."/>
            <person name="He Z."/>
            <person name="Zhou J."/>
            <person name="Richardson P."/>
        </authorList>
    </citation>
    <scope>NUCLEOTIDE SEQUENCE [LARGE SCALE GENOMIC DNA]</scope>
    <source>
        <strain>ATCC 33223 / DSM 2355 / 39E</strain>
    </source>
</reference>
<keyword id="KW-0378">Hydrolase</keyword>
<keyword id="KW-0460">Magnesium</keyword>
<keyword id="KW-0479">Metal-binding</keyword>
<keyword id="KW-0546">Nucleotide metabolism</keyword>
<keyword id="KW-0547">Nucleotide-binding</keyword>
<keyword id="KW-1185">Reference proteome</keyword>
<protein>
    <recommendedName>
        <fullName evidence="1">dITP/XTP pyrophosphatase</fullName>
        <ecNumber evidence="1">3.6.1.66</ecNumber>
    </recommendedName>
    <alternativeName>
        <fullName evidence="1">Non-canonical purine NTP pyrophosphatase</fullName>
    </alternativeName>
    <alternativeName>
        <fullName evidence="1">Non-standard purine NTP pyrophosphatase</fullName>
    </alternativeName>
    <alternativeName>
        <fullName evidence="1">Nucleoside-triphosphate diphosphatase</fullName>
    </alternativeName>
    <alternativeName>
        <fullName evidence="1">Nucleoside-triphosphate pyrophosphatase</fullName>
        <shortName evidence="1">NTPase</shortName>
    </alternativeName>
</protein>
<comment type="function">
    <text evidence="1">Pyrophosphatase that catalyzes the hydrolysis of nucleoside triphosphates to their monophosphate derivatives, with a high preference for the non-canonical purine nucleotides XTP (xanthosine triphosphate), dITP (deoxyinosine triphosphate) and ITP. Seems to function as a house-cleaning enzyme that removes non-canonical purine nucleotides from the nucleotide pool, thus preventing their incorporation into DNA/RNA and avoiding chromosomal lesions.</text>
</comment>
<comment type="catalytic activity">
    <reaction evidence="1">
        <text>XTP + H2O = XMP + diphosphate + H(+)</text>
        <dbReference type="Rhea" id="RHEA:28610"/>
        <dbReference type="ChEBI" id="CHEBI:15377"/>
        <dbReference type="ChEBI" id="CHEBI:15378"/>
        <dbReference type="ChEBI" id="CHEBI:33019"/>
        <dbReference type="ChEBI" id="CHEBI:57464"/>
        <dbReference type="ChEBI" id="CHEBI:61314"/>
        <dbReference type="EC" id="3.6.1.66"/>
    </reaction>
</comment>
<comment type="catalytic activity">
    <reaction evidence="1">
        <text>dITP + H2O = dIMP + diphosphate + H(+)</text>
        <dbReference type="Rhea" id="RHEA:28342"/>
        <dbReference type="ChEBI" id="CHEBI:15377"/>
        <dbReference type="ChEBI" id="CHEBI:15378"/>
        <dbReference type="ChEBI" id="CHEBI:33019"/>
        <dbReference type="ChEBI" id="CHEBI:61194"/>
        <dbReference type="ChEBI" id="CHEBI:61382"/>
        <dbReference type="EC" id="3.6.1.66"/>
    </reaction>
</comment>
<comment type="catalytic activity">
    <reaction evidence="1">
        <text>ITP + H2O = IMP + diphosphate + H(+)</text>
        <dbReference type="Rhea" id="RHEA:29399"/>
        <dbReference type="ChEBI" id="CHEBI:15377"/>
        <dbReference type="ChEBI" id="CHEBI:15378"/>
        <dbReference type="ChEBI" id="CHEBI:33019"/>
        <dbReference type="ChEBI" id="CHEBI:58053"/>
        <dbReference type="ChEBI" id="CHEBI:61402"/>
        <dbReference type="EC" id="3.6.1.66"/>
    </reaction>
</comment>
<comment type="cofactor">
    <cofactor evidence="1">
        <name>Mg(2+)</name>
        <dbReference type="ChEBI" id="CHEBI:18420"/>
    </cofactor>
    <text evidence="1">Binds 1 Mg(2+) ion per subunit.</text>
</comment>
<comment type="subunit">
    <text evidence="1">Homodimer.</text>
</comment>
<comment type="similarity">
    <text evidence="1">Belongs to the HAM1 NTPase family.</text>
</comment>
<gene>
    <name type="ordered locus">Teth39_1682</name>
</gene>
<organism>
    <name type="scientific">Thermoanaerobacter pseudethanolicus (strain ATCC 33223 / 39E)</name>
    <name type="common">Clostridium thermohydrosulfuricum</name>
    <dbReference type="NCBI Taxonomy" id="340099"/>
    <lineage>
        <taxon>Bacteria</taxon>
        <taxon>Bacillati</taxon>
        <taxon>Bacillota</taxon>
        <taxon>Clostridia</taxon>
        <taxon>Thermoanaerobacterales</taxon>
        <taxon>Thermoanaerobacteraceae</taxon>
        <taxon>Thermoanaerobacter</taxon>
    </lineage>
</organism>
<proteinExistence type="inferred from homology"/>
<feature type="chain" id="PRO_1000145500" description="dITP/XTP pyrophosphatase">
    <location>
        <begin position="1"/>
        <end position="198"/>
    </location>
</feature>
<feature type="active site" description="Proton acceptor" evidence="1">
    <location>
        <position position="69"/>
    </location>
</feature>
<feature type="binding site" evidence="1">
    <location>
        <begin position="7"/>
        <end position="12"/>
    </location>
    <ligand>
        <name>substrate</name>
    </ligand>
</feature>
<feature type="binding site" evidence="1">
    <location>
        <position position="40"/>
    </location>
    <ligand>
        <name>Mg(2+)</name>
        <dbReference type="ChEBI" id="CHEBI:18420"/>
    </ligand>
</feature>
<feature type="binding site" evidence="1">
    <location>
        <position position="69"/>
    </location>
    <ligand>
        <name>Mg(2+)</name>
        <dbReference type="ChEBI" id="CHEBI:18420"/>
    </ligand>
</feature>
<feature type="binding site" evidence="1">
    <location>
        <position position="70"/>
    </location>
    <ligand>
        <name>substrate</name>
    </ligand>
</feature>
<feature type="binding site" evidence="1">
    <location>
        <begin position="151"/>
        <end position="154"/>
    </location>
    <ligand>
        <name>substrate</name>
    </ligand>
</feature>
<feature type="binding site" evidence="1">
    <location>
        <position position="174"/>
    </location>
    <ligand>
        <name>substrate</name>
    </ligand>
</feature>
<feature type="binding site" evidence="1">
    <location>
        <begin position="179"/>
        <end position="180"/>
    </location>
    <ligand>
        <name>substrate</name>
    </ligand>
</feature>
<accession>B0KBM4</accession>